<dbReference type="EMBL" id="CP000477">
    <property type="protein sequence ID" value="ABK15478.1"/>
    <property type="molecule type" value="Genomic_DNA"/>
</dbReference>
<dbReference type="SMR" id="A0B9V4"/>
<dbReference type="STRING" id="349307.Mthe_1712"/>
<dbReference type="KEGG" id="mtp:Mthe_1712"/>
<dbReference type="HOGENOM" id="CLU_065464_0_0_2"/>
<dbReference type="OrthoDB" id="7144at2157"/>
<dbReference type="Proteomes" id="UP000000674">
    <property type="component" value="Chromosome"/>
</dbReference>
<dbReference type="GO" id="GO:0022625">
    <property type="term" value="C:cytosolic large ribosomal subunit"/>
    <property type="evidence" value="ECO:0007669"/>
    <property type="project" value="TreeGrafter"/>
</dbReference>
<dbReference type="GO" id="GO:0019843">
    <property type="term" value="F:rRNA binding"/>
    <property type="evidence" value="ECO:0007669"/>
    <property type="project" value="UniProtKB-UniRule"/>
</dbReference>
<dbReference type="GO" id="GO:0003735">
    <property type="term" value="F:structural constituent of ribosome"/>
    <property type="evidence" value="ECO:0007669"/>
    <property type="project" value="InterPro"/>
</dbReference>
<dbReference type="GO" id="GO:0002181">
    <property type="term" value="P:cytoplasmic translation"/>
    <property type="evidence" value="ECO:0007669"/>
    <property type="project" value="TreeGrafter"/>
</dbReference>
<dbReference type="FunFam" id="3.90.930.12:FF:000008">
    <property type="entry name" value="50S ribosomal protein L6"/>
    <property type="match status" value="1"/>
</dbReference>
<dbReference type="FunFam" id="3.90.930.12:FF:000004">
    <property type="entry name" value="60S ribosomal protein L9"/>
    <property type="match status" value="1"/>
</dbReference>
<dbReference type="Gene3D" id="3.90.930.12">
    <property type="entry name" value="Ribosomal protein L6, alpha-beta domain"/>
    <property type="match status" value="2"/>
</dbReference>
<dbReference type="HAMAP" id="MF_01365_A">
    <property type="entry name" value="Ribosomal_uL6_A"/>
    <property type="match status" value="1"/>
</dbReference>
<dbReference type="InterPro" id="IPR000702">
    <property type="entry name" value="Ribosomal_uL6-like"/>
</dbReference>
<dbReference type="InterPro" id="IPR036789">
    <property type="entry name" value="Ribosomal_uL6-like_a/b-dom_sf"/>
</dbReference>
<dbReference type="InterPro" id="IPR020040">
    <property type="entry name" value="Ribosomal_uL6_a/b-dom"/>
</dbReference>
<dbReference type="InterPro" id="IPR019907">
    <property type="entry name" value="Ribosomal_uL6_arc"/>
</dbReference>
<dbReference type="InterPro" id="IPR002359">
    <property type="entry name" value="Ribosomal_uL6_CS2"/>
</dbReference>
<dbReference type="NCBIfam" id="NF004037">
    <property type="entry name" value="PRK05518.1"/>
    <property type="match status" value="1"/>
</dbReference>
<dbReference type="NCBIfam" id="TIGR03653">
    <property type="entry name" value="uL6_arch"/>
    <property type="match status" value="1"/>
</dbReference>
<dbReference type="PANTHER" id="PTHR11655:SF16">
    <property type="entry name" value="60S RIBOSOMAL PROTEIN L9"/>
    <property type="match status" value="1"/>
</dbReference>
<dbReference type="PANTHER" id="PTHR11655">
    <property type="entry name" value="60S/50S RIBOSOMAL PROTEIN L6/L9"/>
    <property type="match status" value="1"/>
</dbReference>
<dbReference type="Pfam" id="PF00347">
    <property type="entry name" value="Ribosomal_L6"/>
    <property type="match status" value="2"/>
</dbReference>
<dbReference type="PIRSF" id="PIRSF002162">
    <property type="entry name" value="Ribosomal_L6"/>
    <property type="match status" value="1"/>
</dbReference>
<dbReference type="SUPFAM" id="SSF56053">
    <property type="entry name" value="Ribosomal protein L6"/>
    <property type="match status" value="2"/>
</dbReference>
<dbReference type="PROSITE" id="PS00700">
    <property type="entry name" value="RIBOSOMAL_L6_2"/>
    <property type="match status" value="1"/>
</dbReference>
<sequence>MVEEVVRRLDIPDGVDVQISGRSVRVKGPKGELSRELWYPDIEIKREDSKILIRSVARKKQHLAMVGTIAAHIKNMIRGVTDGFEYRMRVVYSHFPIQVKVADGKVAISNFLGERKPRFATIVGDVNVEVGKDEILIRGMDKEAVGQTMANIEQATRVRGFDVRIFQDGIYLVEKR</sequence>
<organism>
    <name type="scientific">Methanothrix thermoacetophila (strain DSM 6194 / JCM 14653 / NBRC 101360 / PT)</name>
    <name type="common">Methanosaeta thermophila</name>
    <dbReference type="NCBI Taxonomy" id="349307"/>
    <lineage>
        <taxon>Archaea</taxon>
        <taxon>Methanobacteriati</taxon>
        <taxon>Methanobacteriota</taxon>
        <taxon>Stenosarchaea group</taxon>
        <taxon>Methanomicrobia</taxon>
        <taxon>Methanotrichales</taxon>
        <taxon>Methanotrichaceae</taxon>
        <taxon>Methanothrix</taxon>
    </lineage>
</organism>
<feature type="chain" id="PRO_1000073405" description="Large ribosomal subunit protein uL6">
    <location>
        <begin position="1"/>
        <end position="176"/>
    </location>
</feature>
<gene>
    <name evidence="1" type="primary">rpl6</name>
    <name type="ordered locus">Mthe_1712</name>
</gene>
<proteinExistence type="inferred from homology"/>
<reference key="1">
    <citation type="submission" date="2006-10" db="EMBL/GenBank/DDBJ databases">
        <title>Complete sequence of Methanosaeta thermophila PT.</title>
        <authorList>
            <consortium name="US DOE Joint Genome Institute"/>
            <person name="Copeland A."/>
            <person name="Lucas S."/>
            <person name="Lapidus A."/>
            <person name="Barry K."/>
            <person name="Detter J.C."/>
            <person name="Glavina del Rio T."/>
            <person name="Hammon N."/>
            <person name="Israni S."/>
            <person name="Pitluck S."/>
            <person name="Chain P."/>
            <person name="Malfatti S."/>
            <person name="Shin M."/>
            <person name="Vergez L."/>
            <person name="Schmutz J."/>
            <person name="Larimer F."/>
            <person name="Land M."/>
            <person name="Hauser L."/>
            <person name="Kyrpides N."/>
            <person name="Kim E."/>
            <person name="Smith K.S."/>
            <person name="Ingram-Smith C."/>
            <person name="Richardson P."/>
        </authorList>
    </citation>
    <scope>NUCLEOTIDE SEQUENCE [LARGE SCALE GENOMIC DNA]</scope>
    <source>
        <strain>DSM 6194 / JCM 14653 / NBRC 101360 / PT</strain>
    </source>
</reference>
<name>RL6_METTP</name>
<keyword id="KW-1185">Reference proteome</keyword>
<keyword id="KW-0687">Ribonucleoprotein</keyword>
<keyword id="KW-0689">Ribosomal protein</keyword>
<keyword id="KW-0694">RNA-binding</keyword>
<keyword id="KW-0699">rRNA-binding</keyword>
<comment type="function">
    <text evidence="1">This protein binds to the 23S rRNA, and is important in its secondary structure. It is located near the subunit interface in the base of the L7/L12 stalk, and near the tRNA binding site of the peptidyltransferase center.</text>
</comment>
<comment type="subunit">
    <text evidence="1">Part of the 50S ribosomal subunit.</text>
</comment>
<comment type="similarity">
    <text evidence="1">Belongs to the universal ribosomal protein uL6 family.</text>
</comment>
<protein>
    <recommendedName>
        <fullName evidence="1">Large ribosomal subunit protein uL6</fullName>
    </recommendedName>
    <alternativeName>
        <fullName evidence="2">50S ribosomal protein L6</fullName>
    </alternativeName>
</protein>
<accession>A0B9V4</accession>
<evidence type="ECO:0000255" key="1">
    <source>
        <dbReference type="HAMAP-Rule" id="MF_01365"/>
    </source>
</evidence>
<evidence type="ECO:0000305" key="2"/>